<name>GCSPA_FRAT1</name>
<feature type="chain" id="PRO_1000045649" description="Probable glycine dehydrogenase (decarboxylating) subunit 1">
    <location>
        <begin position="1"/>
        <end position="455"/>
    </location>
</feature>
<evidence type="ECO:0000255" key="1">
    <source>
        <dbReference type="HAMAP-Rule" id="MF_00712"/>
    </source>
</evidence>
<proteinExistence type="inferred from homology"/>
<gene>
    <name evidence="1" type="primary">gcvPA</name>
    <name type="ordered locus">FTF0409</name>
</gene>
<dbReference type="EC" id="1.4.4.2" evidence="1"/>
<dbReference type="EMBL" id="AM286280">
    <property type="protein sequence ID" value="CAL08425.1"/>
    <property type="molecule type" value="Genomic_DNA"/>
</dbReference>
<dbReference type="RefSeq" id="WP_003020123.1">
    <property type="nucleotide sequence ID" value="NC_008245.1"/>
</dbReference>
<dbReference type="SMR" id="Q14J40"/>
<dbReference type="KEGG" id="ftf:FTF0409"/>
<dbReference type="HOGENOM" id="CLU_004620_0_2_6"/>
<dbReference type="GO" id="GO:0004375">
    <property type="term" value="F:glycine dehydrogenase (decarboxylating) activity"/>
    <property type="evidence" value="ECO:0007669"/>
    <property type="project" value="UniProtKB-EC"/>
</dbReference>
<dbReference type="GO" id="GO:0019464">
    <property type="term" value="P:glycine decarboxylation via glycine cleavage system"/>
    <property type="evidence" value="ECO:0007669"/>
    <property type="project" value="UniProtKB-UniRule"/>
</dbReference>
<dbReference type="GO" id="GO:0009116">
    <property type="term" value="P:nucleoside metabolic process"/>
    <property type="evidence" value="ECO:0007669"/>
    <property type="project" value="InterPro"/>
</dbReference>
<dbReference type="CDD" id="cd00613">
    <property type="entry name" value="GDC-P"/>
    <property type="match status" value="1"/>
</dbReference>
<dbReference type="Gene3D" id="3.90.1150.10">
    <property type="entry name" value="Aspartate Aminotransferase, domain 1"/>
    <property type="match status" value="1"/>
</dbReference>
<dbReference type="Gene3D" id="3.40.640.10">
    <property type="entry name" value="Type I PLP-dependent aspartate aminotransferase-like (Major domain)"/>
    <property type="match status" value="1"/>
</dbReference>
<dbReference type="HAMAP" id="MF_00712">
    <property type="entry name" value="GcvPA"/>
    <property type="match status" value="1"/>
</dbReference>
<dbReference type="InterPro" id="IPR023010">
    <property type="entry name" value="GcvPA"/>
</dbReference>
<dbReference type="InterPro" id="IPR049315">
    <property type="entry name" value="GDC-P_N"/>
</dbReference>
<dbReference type="InterPro" id="IPR020581">
    <property type="entry name" value="GDC_P"/>
</dbReference>
<dbReference type="InterPro" id="IPR015424">
    <property type="entry name" value="PyrdxlP-dep_Trfase"/>
</dbReference>
<dbReference type="InterPro" id="IPR015421">
    <property type="entry name" value="PyrdxlP-dep_Trfase_major"/>
</dbReference>
<dbReference type="InterPro" id="IPR015422">
    <property type="entry name" value="PyrdxlP-dep_Trfase_small"/>
</dbReference>
<dbReference type="NCBIfam" id="NF001696">
    <property type="entry name" value="PRK00451.1"/>
    <property type="match status" value="1"/>
</dbReference>
<dbReference type="PANTHER" id="PTHR42806">
    <property type="entry name" value="GLYCINE CLEAVAGE SYSTEM P-PROTEIN"/>
    <property type="match status" value="1"/>
</dbReference>
<dbReference type="PANTHER" id="PTHR42806:SF1">
    <property type="entry name" value="GLYCINE DEHYDROGENASE (DECARBOXYLATING)"/>
    <property type="match status" value="1"/>
</dbReference>
<dbReference type="Pfam" id="PF02347">
    <property type="entry name" value="GDC-P"/>
    <property type="match status" value="1"/>
</dbReference>
<dbReference type="PIRSF" id="PIRSF006815">
    <property type="entry name" value="GcvPA"/>
    <property type="match status" value="1"/>
</dbReference>
<dbReference type="SUPFAM" id="SSF53383">
    <property type="entry name" value="PLP-dependent transferases"/>
    <property type="match status" value="1"/>
</dbReference>
<reference key="1">
    <citation type="journal article" date="2007" name="PLoS ONE">
        <title>Genome sequencing shows that European isolates of Francisella tularensis subspecies tularensis are almost identical to US laboratory strain Schu S4.</title>
        <authorList>
            <person name="Chaudhuri R.R."/>
            <person name="Ren C.-P."/>
            <person name="Desmond L."/>
            <person name="Vincent G.A."/>
            <person name="Silman N.J."/>
            <person name="Brehm J.K."/>
            <person name="Elmore M.J."/>
            <person name="Hudson M.J."/>
            <person name="Forsman M."/>
            <person name="Isherwood K.E."/>
            <person name="Gurycova D."/>
            <person name="Minton N.P."/>
            <person name="Titball R.W."/>
            <person name="Pallen M.J."/>
            <person name="Vipond R."/>
        </authorList>
    </citation>
    <scope>NUCLEOTIDE SEQUENCE [LARGE SCALE GENOMIC DNA]</scope>
    <source>
        <strain>FSC 198</strain>
    </source>
</reference>
<accession>Q14J40</accession>
<organism>
    <name type="scientific">Francisella tularensis subsp. tularensis (strain FSC 198)</name>
    <dbReference type="NCBI Taxonomy" id="393115"/>
    <lineage>
        <taxon>Bacteria</taxon>
        <taxon>Pseudomonadati</taxon>
        <taxon>Pseudomonadota</taxon>
        <taxon>Gammaproteobacteria</taxon>
        <taxon>Thiotrichales</taxon>
        <taxon>Francisellaceae</taxon>
        <taxon>Francisella</taxon>
    </lineage>
</organism>
<keyword id="KW-0560">Oxidoreductase</keyword>
<protein>
    <recommendedName>
        <fullName evidence="1">Probable glycine dehydrogenase (decarboxylating) subunit 1</fullName>
        <ecNumber evidence="1">1.4.4.2</ecNumber>
    </recommendedName>
    <alternativeName>
        <fullName evidence="1">Glycine cleavage system P-protein subunit 1</fullName>
    </alternativeName>
    <alternativeName>
        <fullName evidence="1">Glycine decarboxylase subunit 1</fullName>
    </alternativeName>
    <alternativeName>
        <fullName evidence="1">Glycine dehydrogenase (aminomethyl-transferring) subunit 1</fullName>
    </alternativeName>
</protein>
<sequence>MSFIPHKLEQIKKMLDTIGASSVDQLFDEIPRHLRADTLKIKDGINEIQLANLMRKRANKNHHNINYIGAGAYSHHIPAAIWDIVARGEFYTAYTPYQAEASQGGLQVIYEFQTMMAGLTGMDASNASMYDGATALAESVLMAIRSNKKAKSQKVLIAEALHPTYLRVLETITKHQGIEFDIVNLDSKNGKTDVTKLEDFANTNYAAVVIQSPNFLGQLADVDGITNWAHKHGALVIAVTNPMSLAILKSPAEWGDNGADIVCGEGQPMGVPLASGGPYFGFMTCKMAHVRQMPGRIVGRTVDLDGNEGFCLTLQAREQHIRRAKATSNICTNQGLMVTAATIYMSLLGAEGLERVASISHENTQTLATELAKINGVSIRFNSAFFNEVVIDLPVNAETFVTEMEKEAIDAGYFLGEYHSDLANSIMVCATEIHTSEDIKEYIEATKKVLARIGG</sequence>
<comment type="function">
    <text evidence="1">The glycine cleavage system catalyzes the degradation of glycine. The P protein binds the alpha-amino group of glycine through its pyridoxal phosphate cofactor; CO(2) is released and the remaining methylamine moiety is then transferred to the lipoamide cofactor of the H protein.</text>
</comment>
<comment type="catalytic activity">
    <reaction evidence="1">
        <text>N(6)-[(R)-lipoyl]-L-lysyl-[glycine-cleavage complex H protein] + glycine + H(+) = N(6)-[(R)-S(8)-aminomethyldihydrolipoyl]-L-lysyl-[glycine-cleavage complex H protein] + CO2</text>
        <dbReference type="Rhea" id="RHEA:24304"/>
        <dbReference type="Rhea" id="RHEA-COMP:10494"/>
        <dbReference type="Rhea" id="RHEA-COMP:10495"/>
        <dbReference type="ChEBI" id="CHEBI:15378"/>
        <dbReference type="ChEBI" id="CHEBI:16526"/>
        <dbReference type="ChEBI" id="CHEBI:57305"/>
        <dbReference type="ChEBI" id="CHEBI:83099"/>
        <dbReference type="ChEBI" id="CHEBI:83143"/>
        <dbReference type="EC" id="1.4.4.2"/>
    </reaction>
</comment>
<comment type="subunit">
    <text evidence="1">The glycine cleavage system is composed of four proteins: P, T, L and H. In this organism, the P 'protein' is a heterodimer of two subunits.</text>
</comment>
<comment type="similarity">
    <text evidence="1">Belongs to the GcvP family. N-terminal subunit subfamily.</text>
</comment>